<accession>P0DM98</accession>
<comment type="subcellular location">
    <subcellularLocation>
        <location evidence="1">Secreted</location>
    </subcellularLocation>
</comment>
<comment type="tissue specificity">
    <text evidence="4">Expressed by the venom duct.</text>
</comment>
<comment type="domain">
    <text evidence="3">The cysteine framework is C-C.</text>
</comment>
<comment type="mass spectrometry" mass="1108.6" method="Electrospray" evidence="1">
    <text>monoisotopic.</text>
</comment>
<reference key="1">
    <citation type="journal article" date="2013" name="Peptides">
        <title>Unraveling the peptidome of the South African cone snails Conus pictus and Conus natalis.</title>
        <authorList>
            <person name="Peigneur S."/>
            <person name="Van Der Haegen A."/>
            <person name="Moller C."/>
            <person name="Waelkens E."/>
            <person name="Diego-Garcia E."/>
            <person name="Mari F."/>
            <person name="Naude R."/>
            <person name="Tytgat J."/>
        </authorList>
    </citation>
    <scope>PROTEIN SEQUENCE</scope>
    <scope>SUBCELLULAR LOCATION</scope>
    <scope>MASS SPECTROMETRY</scope>
    <source>
        <tissue>Venom</tissue>
    </source>
</reference>
<sequence length="9" mass="1110">RCLFWSVCP</sequence>
<dbReference type="ConoServer" id="5855">
    <property type="toxin name" value="conopeptide-pc"/>
</dbReference>
<dbReference type="GO" id="GO:0005576">
    <property type="term" value="C:extracellular region"/>
    <property type="evidence" value="ECO:0007669"/>
    <property type="project" value="UniProtKB-SubCell"/>
</dbReference>
<dbReference type="GO" id="GO:0090729">
    <property type="term" value="F:toxin activity"/>
    <property type="evidence" value="ECO:0007669"/>
    <property type="project" value="UniProtKB-KW"/>
</dbReference>
<protein>
    <recommendedName>
        <fullName evidence="2">Conopeptide-pc</fullName>
    </recommendedName>
</protein>
<evidence type="ECO:0000269" key="1">
    <source>
    </source>
</evidence>
<evidence type="ECO:0000303" key="2">
    <source>
    </source>
</evidence>
<evidence type="ECO:0000305" key="3"/>
<evidence type="ECO:0000305" key="4">
    <source>
    </source>
</evidence>
<organism>
    <name type="scientific">Conus pictus</name>
    <name type="common">Cone snail</name>
    <dbReference type="NCBI Taxonomy" id="1042615"/>
    <lineage>
        <taxon>Eukaryota</taxon>
        <taxon>Metazoa</taxon>
        <taxon>Spiralia</taxon>
        <taxon>Lophotrochozoa</taxon>
        <taxon>Mollusca</taxon>
        <taxon>Gastropoda</taxon>
        <taxon>Caenogastropoda</taxon>
        <taxon>Neogastropoda</taxon>
        <taxon>Conoidea</taxon>
        <taxon>Conidae</taxon>
        <taxon>Conus</taxon>
        <taxon>Sciteconus</taxon>
    </lineage>
</organism>
<proteinExistence type="evidence at protein level"/>
<keyword id="KW-0903">Direct protein sequencing</keyword>
<keyword id="KW-1015">Disulfide bond</keyword>
<keyword id="KW-0964">Secreted</keyword>
<keyword id="KW-0800">Toxin</keyword>
<feature type="peptide" id="PRO_0000424795" description="Conopeptide-pc" evidence="1">
    <location>
        <begin position="1"/>
        <end position="9"/>
    </location>
</feature>
<feature type="disulfide bond" evidence="3">
    <location>
        <begin position="2"/>
        <end position="8"/>
    </location>
</feature>
<name>CUPC_CONPB</name>